<keyword id="KW-0002">3D-structure</keyword>
<keyword id="KW-0963">Cytoplasm</keyword>
<keyword id="KW-0238">DNA-binding</keyword>
<keyword id="KW-0342">GTP-binding</keyword>
<keyword id="KW-0547">Nucleotide-binding</keyword>
<keyword id="KW-0597">Phosphoprotein</keyword>
<keyword id="KW-1185">Reference proteome</keyword>
<keyword id="KW-0678">Repressor</keyword>
<keyword id="KW-0804">Transcription</keyword>
<keyword id="KW-0805">Transcription regulation</keyword>
<name>CODY_BACCR</name>
<accession>Q819X8</accession>
<sequence length="259" mass="28793">MELLAKTRKLNALLQSAAGKPVNFREMSDTMCEVIEANVFVVSRRGKLLGYAIHQQIENERMKQMLAERQFPEEYTQSLFNITETSSNLDVNSAYTAFPVENRELFGQGLTTIVPIVGGGERLGTLVLARLGQEFLDDDLILAEYSSTVVGMEILREKAEEIEEEARSKAVVQMAISSLSYSELEAIEHIFEELNGTEGLLVASKIADRVGITRSVIVNALRKLESAGVIESRSLGMKGTYIKVLNDKFLQELAKLKTN</sequence>
<feature type="chain" id="PRO_0000213215" description="Global transcriptional regulator CodY">
    <location>
        <begin position="1"/>
        <end position="259"/>
    </location>
</feature>
<feature type="DNA-binding region" description="H-T-H motif" evidence="1">
    <location>
        <begin position="203"/>
        <end position="222"/>
    </location>
</feature>
<feature type="region of interest" description="GAF domain" evidence="1">
    <location>
        <begin position="1"/>
        <end position="155"/>
    </location>
</feature>
<feature type="modified residue" description="Phosphoserine" evidence="1">
    <location>
        <position position="215"/>
    </location>
</feature>
<feature type="mutagenesis site" description="Cannot form tetramers; when associated with A-183 and A-252." evidence="2">
    <original>R</original>
    <variation>A</variation>
    <location>
        <position position="167"/>
    </location>
</feature>
<feature type="mutagenesis site" description="Cannot form tetramers; when associated with A-167 and A-252." evidence="2">
    <original>E</original>
    <variation>A</variation>
    <location>
        <position position="183"/>
    </location>
</feature>
<feature type="mutagenesis site" description="Cannot form tetramers; when associated with A-167 and A-183." evidence="2">
    <original>E</original>
    <variation>A</variation>
    <location>
        <position position="252"/>
    </location>
</feature>
<feature type="helix" evidence="7">
    <location>
        <begin position="3"/>
        <end position="17"/>
    </location>
</feature>
<feature type="helix" evidence="7">
    <location>
        <begin position="24"/>
        <end position="34"/>
    </location>
</feature>
<feature type="strand" evidence="7">
    <location>
        <begin position="37"/>
        <end position="43"/>
    </location>
</feature>
<feature type="strand" evidence="7">
    <location>
        <begin position="46"/>
        <end position="52"/>
    </location>
</feature>
<feature type="helix" evidence="7">
    <location>
        <begin position="60"/>
        <end position="67"/>
    </location>
</feature>
<feature type="helix" evidence="7">
    <location>
        <begin position="73"/>
        <end position="78"/>
    </location>
</feature>
<feature type="helix" evidence="7">
    <location>
        <begin position="79"/>
        <end position="81"/>
    </location>
</feature>
<feature type="strand" evidence="7">
    <location>
        <begin position="86"/>
        <end position="89"/>
    </location>
</feature>
<feature type="strand" evidence="7">
    <location>
        <begin position="110"/>
        <end position="117"/>
    </location>
</feature>
<feature type="strand" evidence="7">
    <location>
        <begin position="119"/>
        <end position="133"/>
    </location>
</feature>
<feature type="helix" evidence="7">
    <location>
        <begin position="137"/>
        <end position="178"/>
    </location>
</feature>
<feature type="helix" evidence="7">
    <location>
        <begin position="181"/>
        <end position="194"/>
    </location>
</feature>
<feature type="strand" evidence="7">
    <location>
        <begin position="196"/>
        <end position="200"/>
    </location>
</feature>
<feature type="turn" evidence="7">
    <location>
        <begin position="203"/>
        <end position="205"/>
    </location>
</feature>
<feature type="strand" evidence="7">
    <location>
        <begin position="206"/>
        <end position="210"/>
    </location>
</feature>
<feature type="helix" evidence="7">
    <location>
        <begin position="214"/>
        <end position="226"/>
    </location>
</feature>
<feature type="strand" evidence="7">
    <location>
        <begin position="229"/>
        <end position="233"/>
    </location>
</feature>
<feature type="strand" evidence="7">
    <location>
        <begin position="241"/>
        <end position="244"/>
    </location>
</feature>
<feature type="helix" evidence="7">
    <location>
        <begin position="249"/>
        <end position="253"/>
    </location>
</feature>
<protein>
    <recommendedName>
        <fullName evidence="1 4">Global transcriptional regulator CodY</fullName>
    </recommendedName>
</protein>
<organism>
    <name type="scientific">Bacillus cereus (strain ATCC 14579 / DSM 31 / CCUG 7414 / JCM 2152 / NBRC 15305 / NCIMB 9373 / NCTC 2599 / NRRL B-3711)</name>
    <dbReference type="NCBI Taxonomy" id="226900"/>
    <lineage>
        <taxon>Bacteria</taxon>
        <taxon>Bacillati</taxon>
        <taxon>Bacillota</taxon>
        <taxon>Bacilli</taxon>
        <taxon>Bacillales</taxon>
        <taxon>Bacillaceae</taxon>
        <taxon>Bacillus</taxon>
        <taxon>Bacillus cereus group</taxon>
    </lineage>
</organism>
<reference key="1">
    <citation type="journal article" date="2003" name="Nature">
        <title>Genome sequence of Bacillus cereus and comparative analysis with Bacillus anthracis.</title>
        <authorList>
            <person name="Ivanova N."/>
            <person name="Sorokin A."/>
            <person name="Anderson I."/>
            <person name="Galleron N."/>
            <person name="Candelon B."/>
            <person name="Kapatral V."/>
            <person name="Bhattacharyya A."/>
            <person name="Reznik G."/>
            <person name="Mikhailova N."/>
            <person name="Lapidus A."/>
            <person name="Chu L."/>
            <person name="Mazur M."/>
            <person name="Goltsman E."/>
            <person name="Larsen N."/>
            <person name="D'Souza M."/>
            <person name="Walunas T."/>
            <person name="Grechkin Y."/>
            <person name="Pusch G."/>
            <person name="Haselkorn R."/>
            <person name="Fonstein M."/>
            <person name="Ehrlich S.D."/>
            <person name="Overbeek R."/>
            <person name="Kyrpides N.C."/>
        </authorList>
    </citation>
    <scope>NUCLEOTIDE SEQUENCE [LARGE SCALE GENOMIC DNA]</scope>
    <source>
        <strain>ATCC 14579 / DSM 31 / CCUG 7414 / JCM 2152 / NBRC 15305 / NCIMB 9373 / NCTC 2599 / NRRL B-3711</strain>
    </source>
</reference>
<reference evidence="6" key="2">
    <citation type="journal article" date="2016" name="Nucleic Acids Res.">
        <title>The structure of the pleiotropic transcription regulator CodY provides insight into its GTP-sensing mechanism.</title>
        <authorList>
            <person name="Han A.R."/>
            <person name="Kang H.R."/>
            <person name="Son J."/>
            <person name="Kwon D.H."/>
            <person name="Kim S."/>
            <person name="Lee W.C."/>
            <person name="Song H.K."/>
            <person name="Song M.J."/>
            <person name="Hwang K.Y."/>
        </authorList>
    </citation>
    <scope>X-RAY CRYSTALLOGRAPHY (3.00 ANGSTROMS)</scope>
    <scope>ACTIVITY REGULATION</scope>
    <scope>SUBUNIT</scope>
    <scope>DOMAIN</scope>
    <scope>MUTAGENESIS OF ARG-167; GLU-183 AND GLU-252</scope>
</reference>
<dbReference type="EMBL" id="AE016877">
    <property type="protein sequence ID" value="AAP10748.1"/>
    <property type="molecule type" value="Genomic_DNA"/>
</dbReference>
<dbReference type="RefSeq" id="NP_833547.1">
    <property type="nucleotide sequence ID" value="NC_004722.1"/>
</dbReference>
<dbReference type="RefSeq" id="WP_000421290.1">
    <property type="nucleotide sequence ID" value="NZ_CP138336.1"/>
</dbReference>
<dbReference type="PDB" id="5EY2">
    <property type="method" value="X-ray"/>
    <property type="resolution" value="3.00 A"/>
    <property type="chains" value="A/B/C/D=1-259"/>
</dbReference>
<dbReference type="PDBsum" id="5EY2"/>
<dbReference type="SMR" id="Q819X8"/>
<dbReference type="STRING" id="226900.BC_3826"/>
<dbReference type="MetOSite" id="Q819X8"/>
<dbReference type="GeneID" id="93007284"/>
<dbReference type="KEGG" id="bce:BC3826"/>
<dbReference type="PATRIC" id="fig|226900.8.peg.3945"/>
<dbReference type="HOGENOM" id="CLU_089581_0_0_9"/>
<dbReference type="OrthoDB" id="2056at2"/>
<dbReference type="Proteomes" id="UP000001417">
    <property type="component" value="Chromosome"/>
</dbReference>
<dbReference type="GO" id="GO:0005737">
    <property type="term" value="C:cytoplasm"/>
    <property type="evidence" value="ECO:0007669"/>
    <property type="project" value="UniProtKB-SubCell"/>
</dbReference>
<dbReference type="GO" id="GO:0003677">
    <property type="term" value="F:DNA binding"/>
    <property type="evidence" value="ECO:0007669"/>
    <property type="project" value="UniProtKB-UniRule"/>
</dbReference>
<dbReference type="GO" id="GO:0003700">
    <property type="term" value="F:DNA-binding transcription factor activity"/>
    <property type="evidence" value="ECO:0007669"/>
    <property type="project" value="InterPro"/>
</dbReference>
<dbReference type="GO" id="GO:0005525">
    <property type="term" value="F:GTP binding"/>
    <property type="evidence" value="ECO:0007669"/>
    <property type="project" value="UniProtKB-KW"/>
</dbReference>
<dbReference type="GO" id="GO:0045892">
    <property type="term" value="P:negative regulation of DNA-templated transcription"/>
    <property type="evidence" value="ECO:0007669"/>
    <property type="project" value="UniProtKB-UniRule"/>
</dbReference>
<dbReference type="GO" id="GO:0006355">
    <property type="term" value="P:regulation of DNA-templated transcription"/>
    <property type="evidence" value="ECO:0000318"/>
    <property type="project" value="GO_Central"/>
</dbReference>
<dbReference type="FunFam" id="1.10.10.10:FF:000034">
    <property type="entry name" value="GTP-sensing transcriptional pleiotropic repressor CodY"/>
    <property type="match status" value="1"/>
</dbReference>
<dbReference type="FunFam" id="3.30.450.40:FF:000003">
    <property type="entry name" value="GTP-sensing transcriptional pleiotropic repressor CodY"/>
    <property type="match status" value="1"/>
</dbReference>
<dbReference type="Gene3D" id="3.30.450.40">
    <property type="match status" value="1"/>
</dbReference>
<dbReference type="Gene3D" id="1.10.10.10">
    <property type="entry name" value="Winged helix-like DNA-binding domain superfamily/Winged helix DNA-binding domain"/>
    <property type="match status" value="1"/>
</dbReference>
<dbReference type="HAMAP" id="MF_00621">
    <property type="entry name" value="HTH_type_CodY"/>
    <property type="match status" value="1"/>
</dbReference>
<dbReference type="InterPro" id="IPR014154">
    <property type="entry name" value="CodY"/>
</dbReference>
<dbReference type="InterPro" id="IPR029016">
    <property type="entry name" value="GAF-like_dom_sf"/>
</dbReference>
<dbReference type="InterPro" id="IPR013198">
    <property type="entry name" value="GTP_trans_reg_CodY_C"/>
</dbReference>
<dbReference type="InterPro" id="IPR010312">
    <property type="entry name" value="Transc_reg_CodY_N"/>
</dbReference>
<dbReference type="InterPro" id="IPR036388">
    <property type="entry name" value="WH-like_DNA-bd_sf"/>
</dbReference>
<dbReference type="InterPro" id="IPR036390">
    <property type="entry name" value="WH_DNA-bd_sf"/>
</dbReference>
<dbReference type="NCBIfam" id="TIGR02787">
    <property type="entry name" value="codY_Gpos"/>
    <property type="match status" value="1"/>
</dbReference>
<dbReference type="NCBIfam" id="NF003170">
    <property type="entry name" value="PRK04158.1"/>
    <property type="match status" value="1"/>
</dbReference>
<dbReference type="PANTHER" id="PTHR40062:SF1">
    <property type="entry name" value="GLOBAL TRANSCRIPTIONAL REGULATOR CODY"/>
    <property type="match status" value="1"/>
</dbReference>
<dbReference type="PANTHER" id="PTHR40062">
    <property type="entry name" value="GTP-SENSING TRANSCRIPTIONAL PLEIOTROPIC REPRESSOR CODY"/>
    <property type="match status" value="1"/>
</dbReference>
<dbReference type="Pfam" id="PF06018">
    <property type="entry name" value="CodY"/>
    <property type="match status" value="1"/>
</dbReference>
<dbReference type="Pfam" id="PF08222">
    <property type="entry name" value="HTH_CodY"/>
    <property type="match status" value="1"/>
</dbReference>
<dbReference type="PIRSF" id="PIRSF011572">
    <property type="entry name" value="GTP_sensing_CodY"/>
    <property type="match status" value="1"/>
</dbReference>
<dbReference type="SUPFAM" id="SSF46785">
    <property type="entry name" value="Winged helix' DNA-binding domain"/>
    <property type="match status" value="1"/>
</dbReference>
<proteinExistence type="evidence at protein level"/>
<comment type="function">
    <text evidence="1">DNA-binding global transcriptional regulator which is involved in the adaptive response to starvation and acts by directly or indirectly controlling the expression of numerous genes in response to nutrient availability. During rapid exponential growth, CodY is highly active and represses genes whose products allow adaptation to nutrient depletion.</text>
</comment>
<comment type="activity regulation">
    <text evidence="5">Activity of CodY is modulated by interaction with two types of effectors: the branched-chain amino acids (BCAAs) leucine, isoleucine and valine, which are signals of the nutritional status of the cell, and GTP, which may signal the energetic status of the cell.</text>
</comment>
<comment type="subunit">
    <text evidence="2">Homodimer (PubMed:27596595). Homotetramer (PubMed:27596595). May form homodimers under conditions in which energy sources are sufficient (active state) and homotetramers under insufficient nutrient conditions (inactive state) (PubMed:27596595).</text>
</comment>
<comment type="subcellular location">
    <subcellularLocation>
        <location evidence="1">Cytoplasm</location>
    </subcellularLocation>
</comment>
<comment type="domain">
    <text evidence="2">Modular protein made up of an N-terminal effector binding GAF-type domain and a C-terminal wHTH DNA binding domain, separated by a helical linker.</text>
</comment>
<comment type="similarity">
    <text evidence="1">Belongs to the CodY family.</text>
</comment>
<gene>
    <name evidence="1 3" type="primary">codY</name>
    <name type="ordered locus">BC_3826</name>
</gene>
<evidence type="ECO:0000255" key="1">
    <source>
        <dbReference type="HAMAP-Rule" id="MF_00621"/>
    </source>
</evidence>
<evidence type="ECO:0000269" key="2">
    <source>
    </source>
</evidence>
<evidence type="ECO:0000303" key="3">
    <source>
    </source>
</evidence>
<evidence type="ECO:0000305" key="4"/>
<evidence type="ECO:0000305" key="5">
    <source>
    </source>
</evidence>
<evidence type="ECO:0007744" key="6">
    <source>
        <dbReference type="PDB" id="5EY2"/>
    </source>
</evidence>
<evidence type="ECO:0007829" key="7">
    <source>
        <dbReference type="PDB" id="5EY2"/>
    </source>
</evidence>